<dbReference type="EMBL" id="AM180088">
    <property type="protein sequence ID" value="CAJ52938.1"/>
    <property type="molecule type" value="Genomic_DNA"/>
</dbReference>
<dbReference type="RefSeq" id="WP_011572051.1">
    <property type="nucleotide sequence ID" value="NC_008212.1"/>
</dbReference>
<dbReference type="SMR" id="Q18GG0"/>
<dbReference type="STRING" id="362976.HQ_2831A"/>
<dbReference type="GeneID" id="4194614"/>
<dbReference type="KEGG" id="hwa:HQ_2831A"/>
<dbReference type="eggNOG" id="arCOG04094">
    <property type="taxonomic scope" value="Archaea"/>
</dbReference>
<dbReference type="HOGENOM" id="CLU_093240_2_1_2"/>
<dbReference type="Proteomes" id="UP000001975">
    <property type="component" value="Chromosome"/>
</dbReference>
<dbReference type="GO" id="GO:0015934">
    <property type="term" value="C:large ribosomal subunit"/>
    <property type="evidence" value="ECO:0007669"/>
    <property type="project" value="InterPro"/>
</dbReference>
<dbReference type="GO" id="GO:0019843">
    <property type="term" value="F:rRNA binding"/>
    <property type="evidence" value="ECO:0007669"/>
    <property type="project" value="UniProtKB-UniRule"/>
</dbReference>
<dbReference type="GO" id="GO:0003735">
    <property type="term" value="F:structural constituent of ribosome"/>
    <property type="evidence" value="ECO:0007669"/>
    <property type="project" value="InterPro"/>
</dbReference>
<dbReference type="GO" id="GO:0006412">
    <property type="term" value="P:translation"/>
    <property type="evidence" value="ECO:0007669"/>
    <property type="project" value="UniProtKB-UniRule"/>
</dbReference>
<dbReference type="CDD" id="cd06089">
    <property type="entry name" value="KOW_RPL26"/>
    <property type="match status" value="1"/>
</dbReference>
<dbReference type="Gene3D" id="2.30.30.30">
    <property type="match status" value="1"/>
</dbReference>
<dbReference type="HAMAP" id="MF_01326_A">
    <property type="entry name" value="Ribosomal_uL24_A"/>
    <property type="match status" value="1"/>
</dbReference>
<dbReference type="InterPro" id="IPR005824">
    <property type="entry name" value="KOW"/>
</dbReference>
<dbReference type="InterPro" id="IPR014722">
    <property type="entry name" value="Rib_uL2_dom2"/>
</dbReference>
<dbReference type="InterPro" id="IPR005825">
    <property type="entry name" value="Ribosomal_uL24_CS"/>
</dbReference>
<dbReference type="InterPro" id="IPR005756">
    <property type="entry name" value="Ribosomal_uL24_euk/arc"/>
</dbReference>
<dbReference type="InterPro" id="IPR041988">
    <property type="entry name" value="Ribosomal_uL24_KOW"/>
</dbReference>
<dbReference type="InterPro" id="IPR008991">
    <property type="entry name" value="Translation_prot_SH3-like_sf"/>
</dbReference>
<dbReference type="NCBIfam" id="TIGR01080">
    <property type="entry name" value="rplX_A_E"/>
    <property type="match status" value="1"/>
</dbReference>
<dbReference type="PANTHER" id="PTHR11143">
    <property type="entry name" value="60S RIBOSOMAL PROTEIN L26 FAMILY MEMBER"/>
    <property type="match status" value="1"/>
</dbReference>
<dbReference type="Pfam" id="PF00467">
    <property type="entry name" value="KOW"/>
    <property type="match status" value="1"/>
</dbReference>
<dbReference type="Pfam" id="PF16906">
    <property type="entry name" value="Ribosomal_L26"/>
    <property type="match status" value="1"/>
</dbReference>
<dbReference type="SMART" id="SM00739">
    <property type="entry name" value="KOW"/>
    <property type="match status" value="1"/>
</dbReference>
<dbReference type="SUPFAM" id="SSF50104">
    <property type="entry name" value="Translation proteins SH3-like domain"/>
    <property type="match status" value="1"/>
</dbReference>
<dbReference type="PROSITE" id="PS01108">
    <property type="entry name" value="RIBOSOMAL_L24"/>
    <property type="match status" value="1"/>
</dbReference>
<name>RL24_HALWD</name>
<evidence type="ECO:0000255" key="1">
    <source>
        <dbReference type="HAMAP-Rule" id="MF_01326"/>
    </source>
</evidence>
<evidence type="ECO:0000305" key="2"/>
<feature type="chain" id="PRO_1000052225" description="Large ribosomal subunit protein uL24">
    <location>
        <begin position="1"/>
        <end position="119"/>
    </location>
</feature>
<organism>
    <name type="scientific">Haloquadratum walsbyi (strain DSM 16790 / HBSQ001)</name>
    <dbReference type="NCBI Taxonomy" id="362976"/>
    <lineage>
        <taxon>Archaea</taxon>
        <taxon>Methanobacteriati</taxon>
        <taxon>Methanobacteriota</taxon>
        <taxon>Stenosarchaea group</taxon>
        <taxon>Halobacteria</taxon>
        <taxon>Halobacteriales</taxon>
        <taxon>Haloferacaceae</taxon>
        <taxon>Haloquadratum</taxon>
    </lineage>
</organism>
<accession>Q18GG0</accession>
<protein>
    <recommendedName>
        <fullName evidence="1">Large ribosomal subunit protein uL24</fullName>
    </recommendedName>
    <alternativeName>
        <fullName evidence="2">50S ribosomal protein L24</fullName>
    </alternativeName>
</protein>
<gene>
    <name evidence="1" type="primary">rpl24</name>
    <name type="ordered locus">HQ_2831A</name>
</gene>
<keyword id="KW-1185">Reference proteome</keyword>
<keyword id="KW-0687">Ribonucleoprotein</keyword>
<keyword id="KW-0689">Ribosomal protein</keyword>
<keyword id="KW-0694">RNA-binding</keyword>
<keyword id="KW-0699">rRNA-binding</keyword>
<comment type="function">
    <text evidence="1">One of two assembly initiator proteins, it binds directly to the 5'-end of the 23S rRNA, where it nucleates assembly of the 50S subunit.</text>
</comment>
<comment type="function">
    <text evidence="1">Located at the polypeptide exit tunnel on the outside of the subunit.</text>
</comment>
<comment type="subunit">
    <text evidence="1">Part of the 50S ribosomal subunit.</text>
</comment>
<comment type="similarity">
    <text evidence="1">Belongs to the universal ribosomal protein uL24 family.</text>
</comment>
<proteinExistence type="inferred from homology"/>
<reference key="1">
    <citation type="journal article" date="2006" name="BMC Genomics">
        <title>The genome of the square archaeon Haloquadratum walsbyi: life at the limits of water activity.</title>
        <authorList>
            <person name="Bolhuis H."/>
            <person name="Palm P."/>
            <person name="Wende A."/>
            <person name="Falb M."/>
            <person name="Rampp M."/>
            <person name="Rodriguez-Valera F."/>
            <person name="Pfeiffer F."/>
            <person name="Oesterhelt D."/>
        </authorList>
    </citation>
    <scope>NUCLEOTIDE SEQUENCE [LARGE SCALE GENOMIC DNA]</scope>
    <source>
        <strain>DSM 16790 / HBSQ001</strain>
    </source>
</reference>
<sequence length="119" mass="13517">MSKQPRKQRTRTETAPLHERQRAVRATLSDELREEYGQRNVRVNAGDTVEVLRGDDAGHEAEVVTVDLTETVIHVEDVTIEKADGEEVPRPLDSSNLRVTELNLEDSKREARLEEGDEQ</sequence>